<dbReference type="EC" id="7.4.2.8" evidence="1"/>
<dbReference type="EMBL" id="AE017196">
    <property type="protein sequence ID" value="AAS14257.1"/>
    <property type="status" value="ALT_INIT"/>
    <property type="molecule type" value="Genomic_DNA"/>
</dbReference>
<dbReference type="SMR" id="Q73HK8"/>
<dbReference type="EnsemblBacteria" id="AAS14257">
    <property type="protein sequence ID" value="AAS14257"/>
    <property type="gene ID" value="WD_0549"/>
</dbReference>
<dbReference type="KEGG" id="wol:WD_0549"/>
<dbReference type="eggNOG" id="COG0653">
    <property type="taxonomic scope" value="Bacteria"/>
</dbReference>
<dbReference type="Proteomes" id="UP000008215">
    <property type="component" value="Chromosome"/>
</dbReference>
<dbReference type="GO" id="GO:0031522">
    <property type="term" value="C:cell envelope Sec protein transport complex"/>
    <property type="evidence" value="ECO:0007669"/>
    <property type="project" value="TreeGrafter"/>
</dbReference>
<dbReference type="GO" id="GO:0005829">
    <property type="term" value="C:cytosol"/>
    <property type="evidence" value="ECO:0007669"/>
    <property type="project" value="TreeGrafter"/>
</dbReference>
<dbReference type="GO" id="GO:0005886">
    <property type="term" value="C:plasma membrane"/>
    <property type="evidence" value="ECO:0007669"/>
    <property type="project" value="UniProtKB-SubCell"/>
</dbReference>
<dbReference type="GO" id="GO:0005524">
    <property type="term" value="F:ATP binding"/>
    <property type="evidence" value="ECO:0007669"/>
    <property type="project" value="UniProtKB-UniRule"/>
</dbReference>
<dbReference type="GO" id="GO:0046872">
    <property type="term" value="F:metal ion binding"/>
    <property type="evidence" value="ECO:0007669"/>
    <property type="project" value="UniProtKB-KW"/>
</dbReference>
<dbReference type="GO" id="GO:0008564">
    <property type="term" value="F:protein-exporting ATPase activity"/>
    <property type="evidence" value="ECO:0007669"/>
    <property type="project" value="UniProtKB-EC"/>
</dbReference>
<dbReference type="GO" id="GO:0065002">
    <property type="term" value="P:intracellular protein transmembrane transport"/>
    <property type="evidence" value="ECO:0007669"/>
    <property type="project" value="UniProtKB-UniRule"/>
</dbReference>
<dbReference type="GO" id="GO:0017038">
    <property type="term" value="P:protein import"/>
    <property type="evidence" value="ECO:0007669"/>
    <property type="project" value="InterPro"/>
</dbReference>
<dbReference type="GO" id="GO:0006605">
    <property type="term" value="P:protein targeting"/>
    <property type="evidence" value="ECO:0007669"/>
    <property type="project" value="UniProtKB-UniRule"/>
</dbReference>
<dbReference type="GO" id="GO:0043952">
    <property type="term" value="P:protein transport by the Sec complex"/>
    <property type="evidence" value="ECO:0007669"/>
    <property type="project" value="TreeGrafter"/>
</dbReference>
<dbReference type="CDD" id="cd17928">
    <property type="entry name" value="DEXDc_SecA"/>
    <property type="match status" value="1"/>
</dbReference>
<dbReference type="CDD" id="cd18803">
    <property type="entry name" value="SF2_C_secA"/>
    <property type="match status" value="1"/>
</dbReference>
<dbReference type="FunFam" id="3.40.50.300:FF:000113">
    <property type="entry name" value="Preprotein translocase subunit SecA"/>
    <property type="match status" value="1"/>
</dbReference>
<dbReference type="FunFam" id="3.90.1440.10:FF:000001">
    <property type="entry name" value="Preprotein translocase subunit SecA"/>
    <property type="match status" value="1"/>
</dbReference>
<dbReference type="FunFam" id="3.40.50.300:FF:000334">
    <property type="entry name" value="Protein translocase subunit SecA"/>
    <property type="match status" value="1"/>
</dbReference>
<dbReference type="Gene3D" id="1.10.3060.10">
    <property type="entry name" value="Helical scaffold and wing domains of SecA"/>
    <property type="match status" value="1"/>
</dbReference>
<dbReference type="Gene3D" id="3.40.50.300">
    <property type="entry name" value="P-loop containing nucleotide triphosphate hydrolases"/>
    <property type="match status" value="2"/>
</dbReference>
<dbReference type="Gene3D" id="3.90.1440.10">
    <property type="entry name" value="SecA, preprotein cross-linking domain"/>
    <property type="match status" value="1"/>
</dbReference>
<dbReference type="HAMAP" id="MF_01382">
    <property type="entry name" value="SecA"/>
    <property type="match status" value="1"/>
</dbReference>
<dbReference type="InterPro" id="IPR014001">
    <property type="entry name" value="Helicase_ATP-bd"/>
</dbReference>
<dbReference type="InterPro" id="IPR027417">
    <property type="entry name" value="P-loop_NTPase"/>
</dbReference>
<dbReference type="InterPro" id="IPR004027">
    <property type="entry name" value="SEC_C_motif"/>
</dbReference>
<dbReference type="InterPro" id="IPR000185">
    <property type="entry name" value="SecA"/>
</dbReference>
<dbReference type="InterPro" id="IPR020937">
    <property type="entry name" value="SecA_CS"/>
</dbReference>
<dbReference type="InterPro" id="IPR011115">
    <property type="entry name" value="SecA_DEAD"/>
</dbReference>
<dbReference type="InterPro" id="IPR014018">
    <property type="entry name" value="SecA_motor_DEAD"/>
</dbReference>
<dbReference type="InterPro" id="IPR011130">
    <property type="entry name" value="SecA_preprotein_X-link_dom"/>
</dbReference>
<dbReference type="InterPro" id="IPR044722">
    <property type="entry name" value="SecA_SF2_C"/>
</dbReference>
<dbReference type="InterPro" id="IPR011116">
    <property type="entry name" value="SecA_Wing/Scaffold"/>
</dbReference>
<dbReference type="InterPro" id="IPR036266">
    <property type="entry name" value="SecA_Wing/Scaffold_sf"/>
</dbReference>
<dbReference type="InterPro" id="IPR036670">
    <property type="entry name" value="SecA_X-link_sf"/>
</dbReference>
<dbReference type="NCBIfam" id="NF009538">
    <property type="entry name" value="PRK12904.1"/>
    <property type="match status" value="1"/>
</dbReference>
<dbReference type="NCBIfam" id="TIGR00963">
    <property type="entry name" value="secA"/>
    <property type="match status" value="1"/>
</dbReference>
<dbReference type="PANTHER" id="PTHR30612:SF0">
    <property type="entry name" value="CHLOROPLAST PROTEIN-TRANSPORTING ATPASE"/>
    <property type="match status" value="1"/>
</dbReference>
<dbReference type="PANTHER" id="PTHR30612">
    <property type="entry name" value="SECA INNER MEMBRANE COMPONENT OF SEC PROTEIN SECRETION SYSTEM"/>
    <property type="match status" value="1"/>
</dbReference>
<dbReference type="Pfam" id="PF21090">
    <property type="entry name" value="P-loop_SecA"/>
    <property type="match status" value="1"/>
</dbReference>
<dbReference type="Pfam" id="PF02810">
    <property type="entry name" value="SEC-C"/>
    <property type="match status" value="1"/>
</dbReference>
<dbReference type="Pfam" id="PF07517">
    <property type="entry name" value="SecA_DEAD"/>
    <property type="match status" value="1"/>
</dbReference>
<dbReference type="Pfam" id="PF01043">
    <property type="entry name" value="SecA_PP_bind"/>
    <property type="match status" value="1"/>
</dbReference>
<dbReference type="Pfam" id="PF07516">
    <property type="entry name" value="SecA_SW"/>
    <property type="match status" value="1"/>
</dbReference>
<dbReference type="PRINTS" id="PR00906">
    <property type="entry name" value="SECA"/>
</dbReference>
<dbReference type="SMART" id="SM00957">
    <property type="entry name" value="SecA_DEAD"/>
    <property type="match status" value="1"/>
</dbReference>
<dbReference type="SMART" id="SM00958">
    <property type="entry name" value="SecA_PP_bind"/>
    <property type="match status" value="1"/>
</dbReference>
<dbReference type="SUPFAM" id="SSF81886">
    <property type="entry name" value="Helical scaffold and wing domains of SecA"/>
    <property type="match status" value="1"/>
</dbReference>
<dbReference type="SUPFAM" id="SSF52540">
    <property type="entry name" value="P-loop containing nucleoside triphosphate hydrolases"/>
    <property type="match status" value="2"/>
</dbReference>
<dbReference type="SUPFAM" id="SSF81767">
    <property type="entry name" value="Pre-protein crosslinking domain of SecA"/>
    <property type="match status" value="1"/>
</dbReference>
<dbReference type="PROSITE" id="PS01312">
    <property type="entry name" value="SECA"/>
    <property type="match status" value="1"/>
</dbReference>
<dbReference type="PROSITE" id="PS51196">
    <property type="entry name" value="SECA_MOTOR_DEAD"/>
    <property type="match status" value="1"/>
</dbReference>
<accession>Q73HK8</accession>
<proteinExistence type="inferred from homology"/>
<gene>
    <name evidence="1" type="primary">secA</name>
    <name type="ordered locus">WD_0549</name>
</gene>
<comment type="function">
    <text evidence="1">Part of the Sec protein translocase complex. Interacts with the SecYEG preprotein conducting channel. Has a central role in coupling the hydrolysis of ATP to the transfer of proteins into and across the cell membrane, serving both as a receptor for the preprotein-SecB complex and as an ATP-driven molecular motor driving the stepwise translocation of polypeptide chains across the membrane.</text>
</comment>
<comment type="catalytic activity">
    <reaction evidence="1">
        <text>ATP + H2O + cellular proteinSide 1 = ADP + phosphate + cellular proteinSide 2.</text>
        <dbReference type="EC" id="7.4.2.8"/>
    </reaction>
</comment>
<comment type="cofactor">
    <cofactor evidence="1">
        <name>Zn(2+)</name>
        <dbReference type="ChEBI" id="CHEBI:29105"/>
    </cofactor>
    <text evidence="1">May bind 1 zinc ion per subunit.</text>
</comment>
<comment type="subunit">
    <text evidence="1">Monomer and homodimer. Part of the essential Sec protein translocation apparatus which comprises SecA, SecYEG and auxiliary proteins SecDF-YajC and YidC.</text>
</comment>
<comment type="subcellular location">
    <subcellularLocation>
        <location evidence="1">Cell membrane</location>
        <topology evidence="1">Peripheral membrane protein</topology>
        <orientation evidence="1">Cytoplasmic side</orientation>
    </subcellularLocation>
    <subcellularLocation>
        <location evidence="1">Cytoplasm</location>
    </subcellularLocation>
    <text evidence="1">Distribution is 50-50.</text>
</comment>
<comment type="similarity">
    <text evidence="1">Belongs to the SecA family.</text>
</comment>
<comment type="sequence caution" evidence="2">
    <conflict type="erroneous initiation">
        <sequence resource="EMBL-CDS" id="AAS14257"/>
    </conflict>
    <text>Extended N-terminus.</text>
</comment>
<reference key="1">
    <citation type="journal article" date="2004" name="PLoS Biol.">
        <title>Phylogenomics of the reproductive parasite Wolbachia pipientis wMel: a streamlined genome overrun by mobile genetic elements.</title>
        <authorList>
            <person name="Wu M."/>
            <person name="Sun L.V."/>
            <person name="Vamathevan J.J."/>
            <person name="Riegler M."/>
            <person name="DeBoy R.T."/>
            <person name="Brownlie J.C."/>
            <person name="McGraw E.A."/>
            <person name="Martin W."/>
            <person name="Esser C."/>
            <person name="Ahmadinejad N."/>
            <person name="Wiegand C."/>
            <person name="Madupu R."/>
            <person name="Beanan M.J."/>
            <person name="Brinkac L.M."/>
            <person name="Daugherty S.C."/>
            <person name="Durkin A.S."/>
            <person name="Kolonay J.F."/>
            <person name="Nelson W.C."/>
            <person name="Mohamoud Y."/>
            <person name="Lee P."/>
            <person name="Berry K.J."/>
            <person name="Young M.B."/>
            <person name="Utterback T.R."/>
            <person name="Weidman J.F."/>
            <person name="Nierman W.C."/>
            <person name="Paulsen I.T."/>
            <person name="Nelson K.E."/>
            <person name="Tettelin H."/>
            <person name="O'Neill S.L."/>
            <person name="Eisen J.A."/>
        </authorList>
    </citation>
    <scope>NUCLEOTIDE SEQUENCE [LARGE SCALE GENOMIC DNA]</scope>
</reference>
<feature type="chain" id="PRO_0000321039" description="Protein translocase subunit SecA">
    <location>
        <begin position="1"/>
        <end position="868"/>
    </location>
</feature>
<feature type="binding site" evidence="1">
    <location>
        <position position="87"/>
    </location>
    <ligand>
        <name>ATP</name>
        <dbReference type="ChEBI" id="CHEBI:30616"/>
    </ligand>
</feature>
<feature type="binding site" evidence="1">
    <location>
        <begin position="105"/>
        <end position="109"/>
    </location>
    <ligand>
        <name>ATP</name>
        <dbReference type="ChEBI" id="CHEBI:30616"/>
    </ligand>
</feature>
<feature type="binding site" evidence="1">
    <location>
        <position position="500"/>
    </location>
    <ligand>
        <name>ATP</name>
        <dbReference type="ChEBI" id="CHEBI:30616"/>
    </ligand>
</feature>
<feature type="binding site" evidence="1">
    <location>
        <position position="849"/>
    </location>
    <ligand>
        <name>Zn(2+)</name>
        <dbReference type="ChEBI" id="CHEBI:29105"/>
    </ligand>
</feature>
<feature type="binding site" evidence="1">
    <location>
        <position position="851"/>
    </location>
    <ligand>
        <name>Zn(2+)</name>
        <dbReference type="ChEBI" id="CHEBI:29105"/>
    </ligand>
</feature>
<feature type="binding site" evidence="1">
    <location>
        <position position="860"/>
    </location>
    <ligand>
        <name>Zn(2+)</name>
        <dbReference type="ChEBI" id="CHEBI:29105"/>
    </ligand>
</feature>
<feature type="binding site" evidence="1">
    <location>
        <position position="861"/>
    </location>
    <ligand>
        <name>Zn(2+)</name>
        <dbReference type="ChEBI" id="CHEBI:29105"/>
    </ligand>
</feature>
<sequence length="868" mass="99965">MSFFFIRKIFGSTNKKIIKSFRKIVQQINALETEMQSLSDEELAGKTEEFKQELKNGKTLNDLLVPAFAVVREASRRFLNMRHFDVQLIGGMVLHNGMISEMKTGEGKTLVATLAAYLNSLEGKGVHVVTVNDYLAKRDTEWMSKLYNSLGVSVAFITNNLTDEERKEAYSADIVYSTNNELAFDYLRDNMKFSQEDMVQRGFHYGIVDEVDSILIDEARTPLIISGPVEENNQIYKHINKIVTKLVDSDYEVDEKGRTVFLTEDGISRVEELLRSYNLIPENSSLYDTDSMIMTHYIDQALRAYKLFTADKDYIVKDGKVVIIDEFTGRMMEGRRYSDGLHQALEAKENLEIQHENQTLASVTFQNYFRMYNKLSGMTGTAATEAEEFRDIYRLNVVKIPTNVPVKRVDIDDEIYGTEKEKFNAVLKFIEECYKRLQPVLVGTVSIENSEKLSALLQSHSLKHSVLNARYHEQEAYIIAQAGVPGSITIATNMAGRGTDIQLGGNAEMIAKVELKKIKNADEREKKYQEIVERVKKDKEIAIKAGGLCVVGTERHESRRIDDQLRGRSGRQGDPGLSKFFLSLEDDLMRIFGSDRMRSFLQKVGLKNNEAIHHPWINKALEKAQKKVEARNYDVRKSLLKFDDVINNQRKVIFKQRNNILGNEINDLLEVYSEVNESVVEGIIQSGYYEDYIENIVKEFHTRYGITLDKEDLAKFLNKQEALNYINDKIQEFFTEKEKYFNSQHTTDLWNTIVKQMMIMTLDHLWREHLSVLESLRQSISLRAMGQKDPLNEFKREAFLMFESMLEKWKELTIHRLAHFKLADNQEIGNRLHSARNSRLPKVSRNDKCPCNSGKKYKHCHGAVTVVS</sequence>
<protein>
    <recommendedName>
        <fullName evidence="1">Protein translocase subunit SecA</fullName>
        <ecNumber evidence="1">7.4.2.8</ecNumber>
    </recommendedName>
</protein>
<organism>
    <name type="scientific">Wolbachia pipientis wMel</name>
    <dbReference type="NCBI Taxonomy" id="163164"/>
    <lineage>
        <taxon>Bacteria</taxon>
        <taxon>Pseudomonadati</taxon>
        <taxon>Pseudomonadota</taxon>
        <taxon>Alphaproteobacteria</taxon>
        <taxon>Rickettsiales</taxon>
        <taxon>Anaplasmataceae</taxon>
        <taxon>Wolbachieae</taxon>
        <taxon>Wolbachia</taxon>
    </lineage>
</organism>
<name>SECA_WOLPM</name>
<evidence type="ECO:0000255" key="1">
    <source>
        <dbReference type="HAMAP-Rule" id="MF_01382"/>
    </source>
</evidence>
<evidence type="ECO:0000305" key="2"/>
<keyword id="KW-0067">ATP-binding</keyword>
<keyword id="KW-1003">Cell membrane</keyword>
<keyword id="KW-0963">Cytoplasm</keyword>
<keyword id="KW-0472">Membrane</keyword>
<keyword id="KW-0479">Metal-binding</keyword>
<keyword id="KW-0547">Nucleotide-binding</keyword>
<keyword id="KW-0653">Protein transport</keyword>
<keyword id="KW-1278">Translocase</keyword>
<keyword id="KW-0811">Translocation</keyword>
<keyword id="KW-0813">Transport</keyword>
<keyword id="KW-0862">Zinc</keyword>